<organism>
    <name type="scientific">Mus musculus</name>
    <name type="common">Mouse</name>
    <dbReference type="NCBI Taxonomy" id="10090"/>
    <lineage>
        <taxon>Eukaryota</taxon>
        <taxon>Metazoa</taxon>
        <taxon>Chordata</taxon>
        <taxon>Craniata</taxon>
        <taxon>Vertebrata</taxon>
        <taxon>Euteleostomi</taxon>
        <taxon>Mammalia</taxon>
        <taxon>Eutheria</taxon>
        <taxon>Euarchontoglires</taxon>
        <taxon>Glires</taxon>
        <taxon>Rodentia</taxon>
        <taxon>Myomorpha</taxon>
        <taxon>Muroidea</taxon>
        <taxon>Muridae</taxon>
        <taxon>Murinae</taxon>
        <taxon>Mus</taxon>
        <taxon>Mus</taxon>
    </lineage>
</organism>
<sequence>MASLQQGEKQLFEKFWKGTFKAVATPRPESIIVASITARKPMPRTEPQSSLLLPDQDGPSEKLGQHLAPEALGTNSWGREKACRELDPARAHSASQDRDPTPPPSSRGKKKKKKSTRKKRRRSPSYSPSPVKKKKKKSSKKHKRHRSFSKKRRHSSCSPKSKRREEKRHKKQSRSRKSHRHRHHRCPSRSQSSELRSPSCESRHRGRSPEEGRKSRRTHSRRCSKNHCKVSPDARSSHLPSQPLPRLGFLSARGVITGSGSAADLFSKSASPLAATRGRSQEYDSGNDTSSPPSTQTSSARSRGQEKGSPGGDLSKSRDLNCGNTSDSGNSFTTSSPQNKGAVLETVSPACRSRESRGFQSPCLQCAEVKKSSLVPSTARSSPIKECSRSSSYTSTRSSSPSSRSPNPRASPRYTRSRSTSSEKRSYSRSPSYSSKSGKRSPPSRSSRSRRSPSYSRYSPSRERDLKYGEKEPQPRERARRRRRSYSPMRKRRRDSPSHLEARRITSARKRPIPYYRPSPSSSSSLSSASSWYSSSSSSSSSSSRSPSRSYSRSRSPSRSHSSRSQTRSRTRTSRSSSSRSLSLGSRSRSRNRSLSYSSAESYASTRR</sequence>
<name>SRRM4_MOUSE</name>
<evidence type="ECO:0000256" key="1">
    <source>
        <dbReference type="SAM" id="MobiDB-lite"/>
    </source>
</evidence>
<evidence type="ECO:0000269" key="2">
    <source>
    </source>
</evidence>
<evidence type="ECO:0000269" key="3">
    <source>
    </source>
</evidence>
<evidence type="ECO:0000269" key="4">
    <source>
    </source>
</evidence>
<evidence type="ECO:0000303" key="5">
    <source>
    </source>
</evidence>
<evidence type="ECO:0000305" key="6"/>
<keyword id="KW-0025">Alternative splicing</keyword>
<keyword id="KW-0221">Differentiation</keyword>
<keyword id="KW-0507">mRNA processing</keyword>
<keyword id="KW-0508">mRNA splicing</keyword>
<keyword id="KW-0539">Nucleus</keyword>
<keyword id="KW-0597">Phosphoprotein</keyword>
<keyword id="KW-1185">Reference proteome</keyword>
<keyword id="KW-0694">RNA-binding</keyword>
<protein>
    <recommendedName>
        <fullName>Serine/arginine repetitive matrix protein 4</fullName>
    </recommendedName>
    <alternativeName>
        <fullName>Neural-specific serine/arginine repetitive splicing factor of 100 kDa</fullName>
        <shortName>Neural-specific SR-related protein of 100 kDa</shortName>
        <shortName>nSR100</shortName>
    </alternativeName>
</protein>
<proteinExistence type="evidence at protein level"/>
<dbReference type="EMBL" id="AK005085">
    <property type="protein sequence ID" value="BAB23809.1"/>
    <property type="molecule type" value="mRNA"/>
</dbReference>
<dbReference type="EMBL" id="AK053836">
    <property type="protein sequence ID" value="BAC35548.1"/>
    <property type="molecule type" value="mRNA"/>
</dbReference>
<dbReference type="EMBL" id="BC024130">
    <property type="protein sequence ID" value="AAH24130.1"/>
    <property type="molecule type" value="mRNA"/>
</dbReference>
<dbReference type="EMBL" id="BC056392">
    <property type="protein sequence ID" value="AAH56392.1"/>
    <property type="molecule type" value="mRNA"/>
</dbReference>
<dbReference type="CCDS" id="CCDS19601.1">
    <molecule id="Q8BKA3-1"/>
</dbReference>
<dbReference type="RefSeq" id="NP_001390326.1">
    <molecule id="Q8BKA3-1"/>
    <property type="nucleotide sequence ID" value="NM_001403397.1"/>
</dbReference>
<dbReference type="RefSeq" id="NP_081162.1">
    <molecule id="Q8BKA3-1"/>
    <property type="nucleotide sequence ID" value="NM_026886.4"/>
</dbReference>
<dbReference type="RefSeq" id="XP_006530519.1">
    <property type="nucleotide sequence ID" value="XM_006530456.3"/>
</dbReference>
<dbReference type="BioGRID" id="213139">
    <property type="interactions" value="1"/>
</dbReference>
<dbReference type="FunCoup" id="Q8BKA3">
    <property type="interactions" value="859"/>
</dbReference>
<dbReference type="IntAct" id="Q8BKA3">
    <property type="interactions" value="1"/>
</dbReference>
<dbReference type="MINT" id="Q8BKA3"/>
<dbReference type="STRING" id="10090.ENSMUSP00000075488"/>
<dbReference type="GlyGen" id="Q8BKA3">
    <property type="glycosylation" value="1 site"/>
</dbReference>
<dbReference type="iPTMnet" id="Q8BKA3"/>
<dbReference type="PhosphoSitePlus" id="Q8BKA3"/>
<dbReference type="PaxDb" id="10090-ENSMUSP00000075488"/>
<dbReference type="ProteomicsDB" id="257405">
    <molecule id="Q8BKA3-1"/>
</dbReference>
<dbReference type="ProteomicsDB" id="257406">
    <molecule id="Q8BKA3-2"/>
</dbReference>
<dbReference type="Antibodypedia" id="56195">
    <property type="antibodies" value="52 antibodies from 14 providers"/>
</dbReference>
<dbReference type="DNASU" id="68955"/>
<dbReference type="Ensembl" id="ENSMUST00000076124.7">
    <molecule id="Q8BKA3-1"/>
    <property type="protein sequence ID" value="ENSMUSP00000075488.6"/>
    <property type="gene ID" value="ENSMUSG00000063919.12"/>
</dbReference>
<dbReference type="Ensembl" id="ENSMUST00000139425.2">
    <molecule id="Q8BKA3-2"/>
    <property type="protein sequence ID" value="ENSMUSP00000144367.2"/>
    <property type="gene ID" value="ENSMUSG00000063919.12"/>
</dbReference>
<dbReference type="GeneID" id="68955"/>
<dbReference type="KEGG" id="mmu:68955"/>
<dbReference type="UCSC" id="uc008zfb.1">
    <molecule id="Q8BKA3-2"/>
    <property type="organism name" value="mouse"/>
</dbReference>
<dbReference type="UCSC" id="uc008zfc.1">
    <molecule id="Q8BKA3-1"/>
    <property type="organism name" value="mouse"/>
</dbReference>
<dbReference type="AGR" id="MGI:1916205"/>
<dbReference type="CTD" id="84530"/>
<dbReference type="MGI" id="MGI:1916205">
    <property type="gene designation" value="Srrm4"/>
</dbReference>
<dbReference type="VEuPathDB" id="HostDB:ENSMUSG00000063919"/>
<dbReference type="eggNOG" id="ENOG502QSPB">
    <property type="taxonomic scope" value="Eukaryota"/>
</dbReference>
<dbReference type="GeneTree" id="ENSGT00730000111247"/>
<dbReference type="HOGENOM" id="CLU_032561_1_0_1"/>
<dbReference type="InParanoid" id="Q8BKA3"/>
<dbReference type="OMA" id="RHHLQKS"/>
<dbReference type="OrthoDB" id="9950700at2759"/>
<dbReference type="PhylomeDB" id="Q8BKA3"/>
<dbReference type="BioGRID-ORCS" id="68955">
    <property type="hits" value="3 hits in 76 CRISPR screens"/>
</dbReference>
<dbReference type="ChiTaRS" id="Srrm4">
    <property type="organism name" value="mouse"/>
</dbReference>
<dbReference type="PRO" id="PR:Q8BKA3"/>
<dbReference type="Proteomes" id="UP000000589">
    <property type="component" value="Chromosome 5"/>
</dbReference>
<dbReference type="RNAct" id="Q8BKA3">
    <property type="molecule type" value="protein"/>
</dbReference>
<dbReference type="Bgee" id="ENSMUSG00000063919">
    <property type="expression patterns" value="Expressed in embryonic brain and 110 other cell types or tissues"/>
</dbReference>
<dbReference type="ExpressionAtlas" id="Q8BKA3">
    <property type="expression patterns" value="baseline and differential"/>
</dbReference>
<dbReference type="GO" id="GO:0005634">
    <property type="term" value="C:nucleus"/>
    <property type="evidence" value="ECO:0000314"/>
    <property type="project" value="UniProtKB"/>
</dbReference>
<dbReference type="GO" id="GO:0042802">
    <property type="term" value="F:identical protein binding"/>
    <property type="evidence" value="ECO:0007669"/>
    <property type="project" value="Ensembl"/>
</dbReference>
<dbReference type="GO" id="GO:0003729">
    <property type="term" value="F:mRNA binding"/>
    <property type="evidence" value="ECO:0000314"/>
    <property type="project" value="UniProtKB"/>
</dbReference>
<dbReference type="GO" id="GO:0030154">
    <property type="term" value="P:cell differentiation"/>
    <property type="evidence" value="ECO:0000315"/>
    <property type="project" value="UniProtKB"/>
</dbReference>
<dbReference type="GO" id="GO:0006397">
    <property type="term" value="P:mRNA processing"/>
    <property type="evidence" value="ECO:0000314"/>
    <property type="project" value="UniProtKB"/>
</dbReference>
<dbReference type="GO" id="GO:0007399">
    <property type="term" value="P:nervous system development"/>
    <property type="evidence" value="ECO:0000315"/>
    <property type="project" value="UniProtKB"/>
</dbReference>
<dbReference type="GO" id="GO:0000381">
    <property type="term" value="P:regulation of alternative mRNA splicing, via spliceosome"/>
    <property type="evidence" value="ECO:0000315"/>
    <property type="project" value="UniProtKB"/>
</dbReference>
<dbReference type="GO" id="GO:0043484">
    <property type="term" value="P:regulation of RNA splicing"/>
    <property type="evidence" value="ECO:0000314"/>
    <property type="project" value="UniProtKB"/>
</dbReference>
<dbReference type="GO" id="GO:0008380">
    <property type="term" value="P:RNA splicing"/>
    <property type="evidence" value="ECO:0007669"/>
    <property type="project" value="UniProtKB-KW"/>
</dbReference>
<dbReference type="GO" id="GO:0007605">
    <property type="term" value="P:sensory perception of sound"/>
    <property type="evidence" value="ECO:0000315"/>
    <property type="project" value="MGI"/>
</dbReference>
<dbReference type="InterPro" id="IPR029360">
    <property type="entry name" value="SRRM_C"/>
</dbReference>
<dbReference type="InterPro" id="IPR052109">
    <property type="entry name" value="SRRM_Domain-Containing"/>
</dbReference>
<dbReference type="PANTHER" id="PTHR34755">
    <property type="entry name" value="SERINE/ARGININE REPETITIVE MATRIX PROTEIN 3-RELATED"/>
    <property type="match status" value="1"/>
</dbReference>
<dbReference type="PANTHER" id="PTHR34755:SF1">
    <property type="entry name" value="SERINE_ARGININE REPETITIVE MATRIX PROTEIN 4"/>
    <property type="match status" value="1"/>
</dbReference>
<dbReference type="Pfam" id="PF15230">
    <property type="entry name" value="SRRM_C"/>
    <property type="match status" value="1"/>
</dbReference>
<accession>Q8BKA3</accession>
<accession>Q8R1S5</accession>
<accession>Q9CW37</accession>
<comment type="function">
    <text evidence="2 3 4">Splicing factor specifically required for neural cell differentiation. Acts in conjunction with nPTB/PTBP2 by binding directly to its regulated target transcripts and promotes neural-specific exon inclusion in many genes that function in neural cell differentiation. Required to promote the inclusion of neural-specific exon 10 in nPTB/PTBP2, leading to increased expression of neural-specific nPTB/PTBP2. Also promotes the inclusion of exon 16 in DAAM1 in neuron extracts (PubMed:19737518). Promotes alternative splicing of REST transcripts to produce REST isoform 2 (REST4) with greatly reduced repressive activity, thereby activating expression of REST targets in neural cells (PubMed:21884984). Plays an important role during embryonic development as well as in the proper functioning of the adult nervous system. Regulates alternative splicing events in genes with important neuronal functions (PubMed:25838543).</text>
</comment>
<comment type="subcellular location">
    <subcellularLocation>
        <location evidence="2">Nucleus</location>
    </subcellularLocation>
</comment>
<comment type="alternative products">
    <event type="alternative splicing"/>
    <isoform>
        <id>Q8BKA3-1</id>
        <name>1</name>
        <sequence type="displayed"/>
    </isoform>
    <isoform>
        <id>Q8BKA3-2</id>
        <name>2</name>
        <sequence type="described" ref="VSP_029639"/>
    </isoform>
</comment>
<comment type="tissue specificity">
    <text evidence="2 4">Specifically expressed in neuronal cells (at protein level). Expressed in adult nervous system and sensory organ tissues.</text>
</comment>
<comment type="developmental stage">
    <text evidence="4">Expressed in both the central and peripheral nervous system in developing mice.</text>
</comment>
<comment type="PTM">
    <text evidence="2">Phosphorylated.</text>
</comment>
<comment type="disruption phenotype">
    <text evidence="4">About 85% of the mutant mice die in the first few hours after birth and few surviving animals display balance defects and exhibit persistent tremors. Mice show impaired development of the central and peripheral nervous systems in part by disrupting neurite outgrowth, cortical layering in the forebrain, and axon guidance in the corpus callosum.</text>
</comment>
<comment type="similarity">
    <text evidence="6">Belongs to the nSR100 family.</text>
</comment>
<feature type="chain" id="PRO_0000311912" description="Serine/arginine repetitive matrix protein 4">
    <location>
        <begin position="1"/>
        <end position="608"/>
    </location>
</feature>
<feature type="region of interest" description="Disordered" evidence="1">
    <location>
        <begin position="34"/>
        <end position="246"/>
    </location>
</feature>
<feature type="region of interest" description="Disordered" evidence="1">
    <location>
        <begin position="261"/>
        <end position="608"/>
    </location>
</feature>
<feature type="compositionally biased region" description="Basic and acidic residues" evidence="1">
    <location>
        <begin position="78"/>
        <end position="100"/>
    </location>
</feature>
<feature type="compositionally biased region" description="Basic residues" evidence="1">
    <location>
        <begin position="107"/>
        <end position="123"/>
    </location>
</feature>
<feature type="compositionally biased region" description="Basic residues" evidence="1">
    <location>
        <begin position="131"/>
        <end position="187"/>
    </location>
</feature>
<feature type="compositionally biased region" description="Low complexity" evidence="1">
    <location>
        <begin position="188"/>
        <end position="200"/>
    </location>
</feature>
<feature type="compositionally biased region" description="Basic and acidic residues" evidence="1">
    <location>
        <begin position="201"/>
        <end position="213"/>
    </location>
</feature>
<feature type="compositionally biased region" description="Basic residues" evidence="1">
    <location>
        <begin position="214"/>
        <end position="228"/>
    </location>
</feature>
<feature type="compositionally biased region" description="Low complexity" evidence="1">
    <location>
        <begin position="289"/>
        <end position="299"/>
    </location>
</feature>
<feature type="compositionally biased region" description="Polar residues" evidence="1">
    <location>
        <begin position="322"/>
        <end position="339"/>
    </location>
</feature>
<feature type="compositionally biased region" description="Low complexity" evidence="1">
    <location>
        <begin position="389"/>
        <end position="420"/>
    </location>
</feature>
<feature type="compositionally biased region" description="Low complexity" evidence="1">
    <location>
        <begin position="428"/>
        <end position="459"/>
    </location>
</feature>
<feature type="compositionally biased region" description="Basic and acidic residues" evidence="1">
    <location>
        <begin position="460"/>
        <end position="477"/>
    </location>
</feature>
<feature type="compositionally biased region" description="Basic residues" evidence="1">
    <location>
        <begin position="478"/>
        <end position="494"/>
    </location>
</feature>
<feature type="compositionally biased region" description="Basic and acidic residues" evidence="1">
    <location>
        <begin position="495"/>
        <end position="504"/>
    </location>
</feature>
<feature type="compositionally biased region" description="Low complexity" evidence="1">
    <location>
        <begin position="518"/>
        <end position="555"/>
    </location>
</feature>
<feature type="compositionally biased region" description="Basic residues" evidence="1">
    <location>
        <begin position="556"/>
        <end position="573"/>
    </location>
</feature>
<feature type="compositionally biased region" description="Low complexity" evidence="1">
    <location>
        <begin position="574"/>
        <end position="608"/>
    </location>
</feature>
<feature type="splice variant" id="VSP_029639" description="In isoform 2." evidence="5">
    <location>
        <begin position="1"/>
        <end position="488"/>
    </location>
</feature>
<reference key="1">
    <citation type="journal article" date="2005" name="Science">
        <title>The transcriptional landscape of the mammalian genome.</title>
        <authorList>
            <person name="Carninci P."/>
            <person name="Kasukawa T."/>
            <person name="Katayama S."/>
            <person name="Gough J."/>
            <person name="Frith M.C."/>
            <person name="Maeda N."/>
            <person name="Oyama R."/>
            <person name="Ravasi T."/>
            <person name="Lenhard B."/>
            <person name="Wells C."/>
            <person name="Kodzius R."/>
            <person name="Shimokawa K."/>
            <person name="Bajic V.B."/>
            <person name="Brenner S.E."/>
            <person name="Batalov S."/>
            <person name="Forrest A.R."/>
            <person name="Zavolan M."/>
            <person name="Davis M.J."/>
            <person name="Wilming L.G."/>
            <person name="Aidinis V."/>
            <person name="Allen J.E."/>
            <person name="Ambesi-Impiombato A."/>
            <person name="Apweiler R."/>
            <person name="Aturaliya R.N."/>
            <person name="Bailey T.L."/>
            <person name="Bansal M."/>
            <person name="Baxter L."/>
            <person name="Beisel K.W."/>
            <person name="Bersano T."/>
            <person name="Bono H."/>
            <person name="Chalk A.M."/>
            <person name="Chiu K.P."/>
            <person name="Choudhary V."/>
            <person name="Christoffels A."/>
            <person name="Clutterbuck D.R."/>
            <person name="Crowe M.L."/>
            <person name="Dalla E."/>
            <person name="Dalrymple B.P."/>
            <person name="de Bono B."/>
            <person name="Della Gatta G."/>
            <person name="di Bernardo D."/>
            <person name="Down T."/>
            <person name="Engstrom P."/>
            <person name="Fagiolini M."/>
            <person name="Faulkner G."/>
            <person name="Fletcher C.F."/>
            <person name="Fukushima T."/>
            <person name="Furuno M."/>
            <person name="Futaki S."/>
            <person name="Gariboldi M."/>
            <person name="Georgii-Hemming P."/>
            <person name="Gingeras T.R."/>
            <person name="Gojobori T."/>
            <person name="Green R.E."/>
            <person name="Gustincich S."/>
            <person name="Harbers M."/>
            <person name="Hayashi Y."/>
            <person name="Hensch T.K."/>
            <person name="Hirokawa N."/>
            <person name="Hill D."/>
            <person name="Huminiecki L."/>
            <person name="Iacono M."/>
            <person name="Ikeo K."/>
            <person name="Iwama A."/>
            <person name="Ishikawa T."/>
            <person name="Jakt M."/>
            <person name="Kanapin A."/>
            <person name="Katoh M."/>
            <person name="Kawasawa Y."/>
            <person name="Kelso J."/>
            <person name="Kitamura H."/>
            <person name="Kitano H."/>
            <person name="Kollias G."/>
            <person name="Krishnan S.P."/>
            <person name="Kruger A."/>
            <person name="Kummerfeld S.K."/>
            <person name="Kurochkin I.V."/>
            <person name="Lareau L.F."/>
            <person name="Lazarevic D."/>
            <person name="Lipovich L."/>
            <person name="Liu J."/>
            <person name="Liuni S."/>
            <person name="McWilliam S."/>
            <person name="Madan Babu M."/>
            <person name="Madera M."/>
            <person name="Marchionni L."/>
            <person name="Matsuda H."/>
            <person name="Matsuzawa S."/>
            <person name="Miki H."/>
            <person name="Mignone F."/>
            <person name="Miyake S."/>
            <person name="Morris K."/>
            <person name="Mottagui-Tabar S."/>
            <person name="Mulder N."/>
            <person name="Nakano N."/>
            <person name="Nakauchi H."/>
            <person name="Ng P."/>
            <person name="Nilsson R."/>
            <person name="Nishiguchi S."/>
            <person name="Nishikawa S."/>
            <person name="Nori F."/>
            <person name="Ohara O."/>
            <person name="Okazaki Y."/>
            <person name="Orlando V."/>
            <person name="Pang K.C."/>
            <person name="Pavan W.J."/>
            <person name="Pavesi G."/>
            <person name="Pesole G."/>
            <person name="Petrovsky N."/>
            <person name="Piazza S."/>
            <person name="Reed J."/>
            <person name="Reid J.F."/>
            <person name="Ring B.Z."/>
            <person name="Ringwald M."/>
            <person name="Rost B."/>
            <person name="Ruan Y."/>
            <person name="Salzberg S.L."/>
            <person name="Sandelin A."/>
            <person name="Schneider C."/>
            <person name="Schoenbach C."/>
            <person name="Sekiguchi K."/>
            <person name="Semple C.A."/>
            <person name="Seno S."/>
            <person name="Sessa L."/>
            <person name="Sheng Y."/>
            <person name="Shibata Y."/>
            <person name="Shimada H."/>
            <person name="Shimada K."/>
            <person name="Silva D."/>
            <person name="Sinclair B."/>
            <person name="Sperling S."/>
            <person name="Stupka E."/>
            <person name="Sugiura K."/>
            <person name="Sultana R."/>
            <person name="Takenaka Y."/>
            <person name="Taki K."/>
            <person name="Tammoja K."/>
            <person name="Tan S.L."/>
            <person name="Tang S."/>
            <person name="Taylor M.S."/>
            <person name="Tegner J."/>
            <person name="Teichmann S.A."/>
            <person name="Ueda H.R."/>
            <person name="van Nimwegen E."/>
            <person name="Verardo R."/>
            <person name="Wei C.L."/>
            <person name="Yagi K."/>
            <person name="Yamanishi H."/>
            <person name="Zabarovsky E."/>
            <person name="Zhu S."/>
            <person name="Zimmer A."/>
            <person name="Hide W."/>
            <person name="Bult C."/>
            <person name="Grimmond S.M."/>
            <person name="Teasdale R.D."/>
            <person name="Liu E.T."/>
            <person name="Brusic V."/>
            <person name="Quackenbush J."/>
            <person name="Wahlestedt C."/>
            <person name="Mattick J.S."/>
            <person name="Hume D.A."/>
            <person name="Kai C."/>
            <person name="Sasaki D."/>
            <person name="Tomaru Y."/>
            <person name="Fukuda S."/>
            <person name="Kanamori-Katayama M."/>
            <person name="Suzuki M."/>
            <person name="Aoki J."/>
            <person name="Arakawa T."/>
            <person name="Iida J."/>
            <person name="Imamura K."/>
            <person name="Itoh M."/>
            <person name="Kato T."/>
            <person name="Kawaji H."/>
            <person name="Kawagashira N."/>
            <person name="Kawashima T."/>
            <person name="Kojima M."/>
            <person name="Kondo S."/>
            <person name="Konno H."/>
            <person name="Nakano K."/>
            <person name="Ninomiya N."/>
            <person name="Nishio T."/>
            <person name="Okada M."/>
            <person name="Plessy C."/>
            <person name="Shibata K."/>
            <person name="Shiraki T."/>
            <person name="Suzuki S."/>
            <person name="Tagami M."/>
            <person name="Waki K."/>
            <person name="Watahiki A."/>
            <person name="Okamura-Oho Y."/>
            <person name="Suzuki H."/>
            <person name="Kawai J."/>
            <person name="Hayashizaki Y."/>
        </authorList>
    </citation>
    <scope>NUCLEOTIDE SEQUENCE [LARGE SCALE MRNA] (ISOFORM 1)</scope>
    <source>
        <strain>C57BL/6J</strain>
        <tissue>Cerebellum</tissue>
        <tissue>Eye</tissue>
    </source>
</reference>
<reference key="2">
    <citation type="journal article" date="2004" name="Genome Res.">
        <title>The status, quality, and expansion of the NIH full-length cDNA project: the Mammalian Gene Collection (MGC).</title>
        <authorList>
            <consortium name="The MGC Project Team"/>
        </authorList>
    </citation>
    <scope>NUCLEOTIDE SEQUENCE [LARGE SCALE MRNA] (ISOFORMS 1 AND 2)</scope>
    <source>
        <strain>C57BL/6J</strain>
        <strain>FVB/N</strain>
        <tissue>Brain</tissue>
        <tissue>Liver</tissue>
    </source>
</reference>
<reference key="3">
    <citation type="journal article" date="2009" name="Cell">
        <title>Regulation of vertebrate nervous system alternative splicing and development by an SR-related protein.</title>
        <authorList>
            <person name="Calarco J.A."/>
            <person name="Superina S."/>
            <person name="O'Hanlon D."/>
            <person name="Gabut M."/>
            <person name="Raj B."/>
            <person name="Pan Q."/>
            <person name="Skalska U."/>
            <person name="Clarke L."/>
            <person name="Gelinas D."/>
            <person name="van der Kooy D."/>
            <person name="Zhen M."/>
            <person name="Ciruna B."/>
            <person name="Blencowe B.J."/>
        </authorList>
    </citation>
    <scope>FUNCTION</scope>
    <scope>SUBCELLULAR LOCATION</scope>
    <scope>TISSUE SPECIFICITY</scope>
    <scope>RNA-BINDING</scope>
    <scope>PHOSPHORYLATION</scope>
</reference>
<reference key="4">
    <citation type="journal article" date="2011" name="Mol. Cell">
        <title>Cross-regulation between an alternative splicing activator and a transcription repressor controls neurogenesis.</title>
        <authorList>
            <person name="Raj B."/>
            <person name="O'Hanlon D."/>
            <person name="Vessey J.P."/>
            <person name="Pan Q."/>
            <person name="Ray D."/>
            <person name="Buckley N.J."/>
            <person name="Miller F.D."/>
            <person name="Blencowe B.J."/>
        </authorList>
    </citation>
    <scope>FUNCTION</scope>
</reference>
<reference key="5">
    <citation type="journal article" date="2015" name="Genes Dev.">
        <title>Essential roles for the splicing regulator nSR100/SRRM4 during nervous system development.</title>
        <authorList>
            <person name="Quesnel-Vallieres M."/>
            <person name="Irimia M."/>
            <person name="Cordes S.P."/>
            <person name="Blencowe B.J."/>
        </authorList>
    </citation>
    <scope>FUNCTION</scope>
    <scope>DISRUPTION PHENOTYPE</scope>
    <scope>DEVELOPMENTAL STAGE</scope>
    <scope>TISSUE SPECIFICITY</scope>
</reference>
<gene>
    <name type="primary">Srrm4</name>
</gene>